<keyword id="KW-0997">Cell inner membrane</keyword>
<keyword id="KW-1003">Cell membrane</keyword>
<keyword id="KW-0472">Membrane</keyword>
<keyword id="KW-0653">Protein transport</keyword>
<keyword id="KW-1185">Reference proteome</keyword>
<keyword id="KW-0811">Translocation</keyword>
<keyword id="KW-0812">Transmembrane</keyword>
<keyword id="KW-1133">Transmembrane helix</keyword>
<keyword id="KW-0813">Transport</keyword>
<reference key="1">
    <citation type="journal article" date="2007" name="J. Bacteriol.">
        <title>Genome sequence analysis of the emerging human pathogenic acetic acid bacterium Granulibacter bethesdensis.</title>
        <authorList>
            <person name="Greenberg D.E."/>
            <person name="Porcella S.F."/>
            <person name="Zelazny A.M."/>
            <person name="Virtaneva K."/>
            <person name="Sturdevant D.E."/>
            <person name="Kupko J.J. III"/>
            <person name="Barbian K.D."/>
            <person name="Babar A."/>
            <person name="Dorward D.W."/>
            <person name="Holland S.M."/>
        </authorList>
    </citation>
    <scope>NUCLEOTIDE SEQUENCE [LARGE SCALE GENOMIC DNA]</scope>
    <source>
        <strain>ATCC BAA-1260 / CGDNIH1</strain>
    </source>
</reference>
<feature type="chain" id="PRO_0000301171" description="Sec-independent protein translocase protein TatB">
    <location>
        <begin position="1"/>
        <end position="177"/>
    </location>
</feature>
<feature type="transmembrane region" description="Helical" evidence="1">
    <location>
        <begin position="1"/>
        <end position="21"/>
    </location>
</feature>
<feature type="region of interest" description="Disordered" evidence="2">
    <location>
        <begin position="136"/>
        <end position="177"/>
    </location>
</feature>
<feature type="compositionally biased region" description="Basic and acidic residues" evidence="2">
    <location>
        <begin position="136"/>
        <end position="146"/>
    </location>
</feature>
<organism>
    <name type="scientific">Granulibacter bethesdensis (strain ATCC BAA-1260 / CGDNIH1)</name>
    <dbReference type="NCBI Taxonomy" id="391165"/>
    <lineage>
        <taxon>Bacteria</taxon>
        <taxon>Pseudomonadati</taxon>
        <taxon>Pseudomonadota</taxon>
        <taxon>Alphaproteobacteria</taxon>
        <taxon>Acetobacterales</taxon>
        <taxon>Acetobacteraceae</taxon>
        <taxon>Granulibacter</taxon>
    </lineage>
</organism>
<sequence length="177" mass="19391">MFDFAWSEIAVIGVVALVVIGPKDIPGAVRGVARMVRKARSMAAEFQGQMDQMMKEADLGDVRETFNDLRGVNLRQQLSRTLDPDGSMRSTFDNNPMAPSPAPMIMGGDEAHMVEERPFHSLSVMDESHMASEWTREKTVSSETARRAATAPAFIPPGEAFRSARRAPAFIPPADQG</sequence>
<gene>
    <name evidence="1" type="primary">tatB</name>
    <name type="ordered locus">GbCGDNIH1_1254</name>
</gene>
<comment type="function">
    <text evidence="1">Part of the twin-arginine translocation (Tat) system that transports large folded proteins containing a characteristic twin-arginine motif in their signal peptide across membranes. Together with TatC, TatB is part of a receptor directly interacting with Tat signal peptides. TatB may form an oligomeric binding site that transiently accommodates folded Tat precursor proteins before their translocation.</text>
</comment>
<comment type="subunit">
    <text evidence="1">The Tat system comprises two distinct complexes: a TatABC complex, containing multiple copies of TatA, TatB and TatC subunits, and a separate TatA complex, containing only TatA subunits. Substrates initially bind to the TatABC complex, which probably triggers association of the separate TatA complex to form the active translocon.</text>
</comment>
<comment type="subcellular location">
    <subcellularLocation>
        <location evidence="1">Cell inner membrane</location>
        <topology evidence="1">Single-pass membrane protein</topology>
    </subcellularLocation>
</comment>
<comment type="similarity">
    <text evidence="1">Belongs to the TatB family.</text>
</comment>
<protein>
    <recommendedName>
        <fullName evidence="1">Sec-independent protein translocase protein TatB</fullName>
    </recommendedName>
</protein>
<name>TATB_GRABC</name>
<accession>Q0BSQ0</accession>
<dbReference type="EMBL" id="CP000394">
    <property type="protein sequence ID" value="ABI62152.1"/>
    <property type="molecule type" value="Genomic_DNA"/>
</dbReference>
<dbReference type="RefSeq" id="WP_011631961.1">
    <property type="nucleotide sequence ID" value="NC_008343.2"/>
</dbReference>
<dbReference type="SMR" id="Q0BSQ0"/>
<dbReference type="STRING" id="391165.GbCGDNIH1_1254"/>
<dbReference type="KEGG" id="gbe:GbCGDNIH1_1254"/>
<dbReference type="eggNOG" id="COG1826">
    <property type="taxonomic scope" value="Bacteria"/>
</dbReference>
<dbReference type="HOGENOM" id="CLU_086034_1_3_5"/>
<dbReference type="OrthoDB" id="7206969at2"/>
<dbReference type="Proteomes" id="UP000001963">
    <property type="component" value="Chromosome"/>
</dbReference>
<dbReference type="GO" id="GO:0033281">
    <property type="term" value="C:TAT protein transport complex"/>
    <property type="evidence" value="ECO:0007669"/>
    <property type="project" value="UniProtKB-UniRule"/>
</dbReference>
<dbReference type="GO" id="GO:0008320">
    <property type="term" value="F:protein transmembrane transporter activity"/>
    <property type="evidence" value="ECO:0007669"/>
    <property type="project" value="UniProtKB-UniRule"/>
</dbReference>
<dbReference type="GO" id="GO:0043953">
    <property type="term" value="P:protein transport by the Tat complex"/>
    <property type="evidence" value="ECO:0007669"/>
    <property type="project" value="UniProtKB-UniRule"/>
</dbReference>
<dbReference type="Gene3D" id="1.20.5.3310">
    <property type="match status" value="1"/>
</dbReference>
<dbReference type="HAMAP" id="MF_00237">
    <property type="entry name" value="TatB"/>
    <property type="match status" value="1"/>
</dbReference>
<dbReference type="InterPro" id="IPR018448">
    <property type="entry name" value="TatB"/>
</dbReference>
<dbReference type="NCBIfam" id="TIGR01410">
    <property type="entry name" value="tatB"/>
    <property type="match status" value="1"/>
</dbReference>
<dbReference type="PANTHER" id="PTHR33162">
    <property type="entry name" value="SEC-INDEPENDENT PROTEIN TRANSLOCASE PROTEIN TATA, CHLOROPLASTIC"/>
    <property type="match status" value="1"/>
</dbReference>
<dbReference type="PANTHER" id="PTHR33162:SF1">
    <property type="entry name" value="SEC-INDEPENDENT PROTEIN TRANSLOCASE PROTEIN TATA, CHLOROPLASTIC"/>
    <property type="match status" value="1"/>
</dbReference>
<dbReference type="PRINTS" id="PR01506">
    <property type="entry name" value="TATBPROTEIN"/>
</dbReference>
<proteinExistence type="inferred from homology"/>
<evidence type="ECO:0000255" key="1">
    <source>
        <dbReference type="HAMAP-Rule" id="MF_00237"/>
    </source>
</evidence>
<evidence type="ECO:0000256" key="2">
    <source>
        <dbReference type="SAM" id="MobiDB-lite"/>
    </source>
</evidence>